<sequence length="398" mass="45452">MIIHSLLDTDLYKFTMMQAVLHQHPAAQVDYRFKCRTPGVDLAQFIDEISREIDALCRLRLREDEVDYLRSLRFIKPDFADFLALFHLDRKYLALAASAAHPGEIELTIRGPWLHTILFEVPLLAIINEVWFRNTSEPDFEEGRSRLREKVRSLRSMPAGCKIADYGTRRRYSRQWHGELLPLLRDGLGEQFVGTSNVFFAKQYGLTPLGTMAHEYLQAFQALGPRLRDSQVAALDSWAREYRGDLGIALSDVVGLDAFLRDFDLYFCKLFDGMRHDSGDPFDWGERVIAHLEAHRVDPRTKVLVFSDGLNIDKVMRLYEHFSPRCRLAFGVGTSLTNDLGPTPLQIVIKMVRCNGQPVAKLSDSPGKSMCEDLGYLRYLRDVFGLPPMPEAGDPARQ</sequence>
<keyword id="KW-0436">Ligase</keyword>
<keyword id="KW-0597">Phosphoprotein</keyword>
<keyword id="KW-0662">Pyridine nucleotide biosynthesis</keyword>
<protein>
    <recommendedName>
        <fullName evidence="1">Nicotinate phosphoribosyltransferase</fullName>
        <shortName evidence="1">NAPRTase</shortName>
        <ecNumber evidence="1">6.3.4.21</ecNumber>
    </recommendedName>
</protein>
<accession>Q4UQS8</accession>
<dbReference type="EC" id="6.3.4.21" evidence="1"/>
<dbReference type="EMBL" id="CP000050">
    <property type="protein sequence ID" value="AAY50595.1"/>
    <property type="molecule type" value="Genomic_DNA"/>
</dbReference>
<dbReference type="RefSeq" id="WP_011035921.1">
    <property type="nucleotide sequence ID" value="NZ_CP155948.1"/>
</dbReference>
<dbReference type="SMR" id="Q4UQS8"/>
<dbReference type="KEGG" id="xcb:XC_3552"/>
<dbReference type="HOGENOM" id="CLU_030991_1_0_6"/>
<dbReference type="UniPathway" id="UPA00253">
    <property type="reaction ID" value="UER00457"/>
</dbReference>
<dbReference type="Proteomes" id="UP000000420">
    <property type="component" value="Chromosome"/>
</dbReference>
<dbReference type="GO" id="GO:0005829">
    <property type="term" value="C:cytosol"/>
    <property type="evidence" value="ECO:0007669"/>
    <property type="project" value="TreeGrafter"/>
</dbReference>
<dbReference type="GO" id="GO:0004516">
    <property type="term" value="F:nicotinate phosphoribosyltransferase activity"/>
    <property type="evidence" value="ECO:0007669"/>
    <property type="project" value="UniProtKB-UniRule"/>
</dbReference>
<dbReference type="GO" id="GO:0034355">
    <property type="term" value="P:NAD biosynthetic process via the salvage pathway"/>
    <property type="evidence" value="ECO:0007669"/>
    <property type="project" value="TreeGrafter"/>
</dbReference>
<dbReference type="CDD" id="cd01401">
    <property type="entry name" value="PncB_like"/>
    <property type="match status" value="1"/>
</dbReference>
<dbReference type="FunFam" id="3.20.140.10:FF:000008">
    <property type="entry name" value="Nicotinate phosphoribosyltransferase"/>
    <property type="match status" value="1"/>
</dbReference>
<dbReference type="Gene3D" id="3.20.140.10">
    <property type="entry name" value="nicotinate phosphoribosyltransferase"/>
    <property type="match status" value="1"/>
</dbReference>
<dbReference type="HAMAP" id="MF_00570">
    <property type="entry name" value="NAPRTase"/>
    <property type="match status" value="1"/>
</dbReference>
<dbReference type="InterPro" id="IPR041525">
    <property type="entry name" value="N/Namide_PRibTrfase"/>
</dbReference>
<dbReference type="InterPro" id="IPR040727">
    <property type="entry name" value="NAPRTase_N"/>
</dbReference>
<dbReference type="InterPro" id="IPR006406">
    <property type="entry name" value="Nic_PRibTrfase"/>
</dbReference>
<dbReference type="InterPro" id="IPR007229">
    <property type="entry name" value="Nic_PRibTrfase-Fam"/>
</dbReference>
<dbReference type="InterPro" id="IPR036068">
    <property type="entry name" value="Nicotinate_pribotase-like_C"/>
</dbReference>
<dbReference type="NCBIfam" id="TIGR01514">
    <property type="entry name" value="NAPRTase"/>
    <property type="match status" value="1"/>
</dbReference>
<dbReference type="NCBIfam" id="NF003704">
    <property type="entry name" value="PRK05321.1"/>
    <property type="match status" value="1"/>
</dbReference>
<dbReference type="PANTHER" id="PTHR11098">
    <property type="entry name" value="NICOTINATE PHOSPHORIBOSYLTRANSFERASE"/>
    <property type="match status" value="1"/>
</dbReference>
<dbReference type="PANTHER" id="PTHR11098:SF1">
    <property type="entry name" value="NICOTINATE PHOSPHORIBOSYLTRANSFERASE"/>
    <property type="match status" value="1"/>
</dbReference>
<dbReference type="Pfam" id="PF04095">
    <property type="entry name" value="NAPRTase"/>
    <property type="match status" value="1"/>
</dbReference>
<dbReference type="Pfam" id="PF17767">
    <property type="entry name" value="NAPRTase_N"/>
    <property type="match status" value="1"/>
</dbReference>
<dbReference type="PIRSF" id="PIRSF000484">
    <property type="entry name" value="NAPRT"/>
    <property type="match status" value="1"/>
</dbReference>
<dbReference type="SUPFAM" id="SSF51690">
    <property type="entry name" value="Nicotinate/Quinolinate PRTase C-terminal domain-like"/>
    <property type="match status" value="1"/>
</dbReference>
<dbReference type="SUPFAM" id="SSF54675">
    <property type="entry name" value="Nicotinate/Quinolinate PRTase N-terminal domain-like"/>
    <property type="match status" value="1"/>
</dbReference>
<organism>
    <name type="scientific">Xanthomonas campestris pv. campestris (strain 8004)</name>
    <dbReference type="NCBI Taxonomy" id="314565"/>
    <lineage>
        <taxon>Bacteria</taxon>
        <taxon>Pseudomonadati</taxon>
        <taxon>Pseudomonadota</taxon>
        <taxon>Gammaproteobacteria</taxon>
        <taxon>Lysobacterales</taxon>
        <taxon>Lysobacteraceae</taxon>
        <taxon>Xanthomonas</taxon>
    </lineage>
</organism>
<proteinExistence type="inferred from homology"/>
<reference key="1">
    <citation type="journal article" date="2005" name="Genome Res.">
        <title>Comparative and functional genomic analyses of the pathogenicity of phytopathogen Xanthomonas campestris pv. campestris.</title>
        <authorList>
            <person name="Qian W."/>
            <person name="Jia Y."/>
            <person name="Ren S.-X."/>
            <person name="He Y.-Q."/>
            <person name="Feng J.-X."/>
            <person name="Lu L.-F."/>
            <person name="Sun Q."/>
            <person name="Ying G."/>
            <person name="Tang D.-J."/>
            <person name="Tang H."/>
            <person name="Wu W."/>
            <person name="Hao P."/>
            <person name="Wang L."/>
            <person name="Jiang B.-L."/>
            <person name="Zeng S."/>
            <person name="Gu W.-Y."/>
            <person name="Lu G."/>
            <person name="Rong L."/>
            <person name="Tian Y."/>
            <person name="Yao Z."/>
            <person name="Fu G."/>
            <person name="Chen B."/>
            <person name="Fang R."/>
            <person name="Qiang B."/>
            <person name="Chen Z."/>
            <person name="Zhao G.-P."/>
            <person name="Tang J.-L."/>
            <person name="He C."/>
        </authorList>
    </citation>
    <scope>NUCLEOTIDE SEQUENCE [LARGE SCALE GENOMIC DNA]</scope>
    <source>
        <strain>8004</strain>
    </source>
</reference>
<gene>
    <name evidence="1" type="primary">pncB</name>
    <name type="ordered locus">XC_3552</name>
</gene>
<evidence type="ECO:0000255" key="1">
    <source>
        <dbReference type="HAMAP-Rule" id="MF_00570"/>
    </source>
</evidence>
<name>PNCB_XANC8</name>
<feature type="chain" id="PRO_1000025019" description="Nicotinate phosphoribosyltransferase">
    <location>
        <begin position="1"/>
        <end position="398"/>
    </location>
</feature>
<feature type="modified residue" description="Phosphohistidine; by autocatalysis" evidence="1">
    <location>
        <position position="214"/>
    </location>
</feature>
<comment type="function">
    <text evidence="1">Catalyzes the synthesis of beta-nicotinate D-ribonucleotide from nicotinate and 5-phospho-D-ribose 1-phosphate at the expense of ATP.</text>
</comment>
<comment type="catalytic activity">
    <reaction evidence="1">
        <text>nicotinate + 5-phospho-alpha-D-ribose 1-diphosphate + ATP + H2O = nicotinate beta-D-ribonucleotide + ADP + phosphate + diphosphate</text>
        <dbReference type="Rhea" id="RHEA:36163"/>
        <dbReference type="ChEBI" id="CHEBI:15377"/>
        <dbReference type="ChEBI" id="CHEBI:30616"/>
        <dbReference type="ChEBI" id="CHEBI:32544"/>
        <dbReference type="ChEBI" id="CHEBI:33019"/>
        <dbReference type="ChEBI" id="CHEBI:43474"/>
        <dbReference type="ChEBI" id="CHEBI:57502"/>
        <dbReference type="ChEBI" id="CHEBI:58017"/>
        <dbReference type="ChEBI" id="CHEBI:456216"/>
        <dbReference type="EC" id="6.3.4.21"/>
    </reaction>
</comment>
<comment type="pathway">
    <text evidence="1">Cofactor biosynthesis; NAD(+) biosynthesis; nicotinate D-ribonucleotide from nicotinate: step 1/1.</text>
</comment>
<comment type="PTM">
    <text evidence="1">Transiently phosphorylated on a His residue during the reaction cycle. Phosphorylation strongly increases the affinity for substrates and increases the rate of nicotinate D-ribonucleotide production. Dephosphorylation regenerates the low-affinity form of the enzyme, leading to product release.</text>
</comment>
<comment type="similarity">
    <text evidence="1">Belongs to the NAPRTase family.</text>
</comment>